<sequence length="303" mass="34787">MLNSHNRTEERSTEDIILEPYTYLISQPGKDIRAKLISAFDLWLHVPKDVLCVINKIIGMLHNASLMIDDVQDDSDLRRGVPVAHHIYGVPQTINTANYVIFLALQEVMKLNIPSMMQVCTEELINLHRGQGIELYWRDSLTCPTEEEYIDMVNNKTSGLLRLAVRLMQAASESDIDYTPLVNIIGIHFQVRDDYMNLQSTSYTNNKGFCEDLTEGKFSFPIIHAIRKDPSNRQLLNIISQKPTSIEVKKYALEVIRKAGSFEYVREFLRQKEAESLKEIKRLGGNPLLEKYIETIRVEATND</sequence>
<accession>Q9P885</accession>
<organism>
    <name type="scientific">Mucor circinelloides f. lusitanicus</name>
    <name type="common">Mucor racemosus var. lusitanicus</name>
    <dbReference type="NCBI Taxonomy" id="29924"/>
    <lineage>
        <taxon>Eukaryota</taxon>
        <taxon>Fungi</taxon>
        <taxon>Fungi incertae sedis</taxon>
        <taxon>Mucoromycota</taxon>
        <taxon>Mucoromycotina</taxon>
        <taxon>Mucoromycetes</taxon>
        <taxon>Mucorales</taxon>
        <taxon>Mucorineae</taxon>
        <taxon>Mucoraceae</taxon>
        <taxon>Mucor</taxon>
    </lineage>
</organism>
<proteinExistence type="evidence at protein level"/>
<keyword id="KW-0125">Carotenoid biosynthesis</keyword>
<keyword id="KW-0963">Cytoplasm</keyword>
<keyword id="KW-0414">Isoprene biosynthesis</keyword>
<keyword id="KW-0460">Magnesium</keyword>
<keyword id="KW-0479">Metal-binding</keyword>
<keyword id="KW-0808">Transferase</keyword>
<reference evidence="5 6" key="1">
    <citation type="journal article" date="2003" name="Curr. Genet.">
        <title>Expression of the carG gene, encoding geranylgeranyl pyrophosphate synthase, is up-regulated by blue light in Mucor circinelloides.</title>
        <authorList>
            <person name="Velayos A."/>
            <person name="Papp T."/>
            <person name="Aguilar-Elena R."/>
            <person name="Fuentes-Vicente M."/>
            <person name="Eslava A.P."/>
            <person name="Iturriaga E.A."/>
            <person name="Alvarez M.I."/>
        </authorList>
    </citation>
    <scope>NUCLEOTIDE SEQUENCE [GENOMIC DNA]</scope>
    <scope>CATALYTIC ACTIVITY</scope>
    <scope>PATHWAY</scope>
    <scope>INDUCTION</scope>
    <source>
        <strain>ATCC 1216b / BCRC 32522 / CBS 277.49 / NRRL 3631</strain>
        <tissue evidence="4">Mycelium</tissue>
    </source>
</reference>
<comment type="function">
    <text evidence="5">Catalyzes the trans-addition of the three molecules of IPP onto DMAPP to form geranylgeranyl pyrophosphate.</text>
</comment>
<comment type="catalytic activity">
    <reaction evidence="4 5">
        <text>isopentenyl diphosphate + dimethylallyl diphosphate = (2E)-geranyl diphosphate + diphosphate</text>
        <dbReference type="Rhea" id="RHEA:22408"/>
        <dbReference type="ChEBI" id="CHEBI:33019"/>
        <dbReference type="ChEBI" id="CHEBI:57623"/>
        <dbReference type="ChEBI" id="CHEBI:58057"/>
        <dbReference type="ChEBI" id="CHEBI:128769"/>
        <dbReference type="EC" id="2.5.1.1"/>
    </reaction>
</comment>
<comment type="catalytic activity">
    <reaction evidence="4">
        <text>isopentenyl diphosphate + (2E)-geranyl diphosphate = (2E,6E)-farnesyl diphosphate + diphosphate</text>
        <dbReference type="Rhea" id="RHEA:19361"/>
        <dbReference type="ChEBI" id="CHEBI:33019"/>
        <dbReference type="ChEBI" id="CHEBI:58057"/>
        <dbReference type="ChEBI" id="CHEBI:128769"/>
        <dbReference type="ChEBI" id="CHEBI:175763"/>
        <dbReference type="EC" id="2.5.1.10"/>
    </reaction>
</comment>
<comment type="catalytic activity">
    <reaction evidence="4">
        <text>isopentenyl diphosphate + (2E,6E)-farnesyl diphosphate = (2E,6E,10E)-geranylgeranyl diphosphate + diphosphate</text>
        <dbReference type="Rhea" id="RHEA:17653"/>
        <dbReference type="ChEBI" id="CHEBI:33019"/>
        <dbReference type="ChEBI" id="CHEBI:58756"/>
        <dbReference type="ChEBI" id="CHEBI:128769"/>
        <dbReference type="ChEBI" id="CHEBI:175763"/>
        <dbReference type="EC" id="2.5.1.29"/>
    </reaction>
</comment>
<comment type="cofactor">
    <cofactor evidence="1">
        <name>Mg(2+)</name>
        <dbReference type="ChEBI" id="CHEBI:18420"/>
    </cofactor>
    <text evidence="1">Binds 2 Mg(2+) ions per subunit.</text>
</comment>
<comment type="pathway">
    <text evidence="4">Isoprenoid biosynthesis; farnesyl diphosphate biosynthesis; farnesyl diphosphate from geranyl diphosphate and isopentenyl diphosphate: step 1/1.</text>
</comment>
<comment type="pathway">
    <text evidence="4">Isoprenoid biosynthesis; geranyl diphosphate biosynthesis; geranyl diphosphate from dimethylallyl diphosphate and isopentenyl diphosphate: step 1/1.</text>
</comment>
<comment type="pathway">
    <text evidence="4">Isoprenoid biosynthesis; geranylgeranyl diphosphate biosynthesis; geranylgeranyl diphosphate from farnesyl diphosphate and isopentenyl diphosphate: step 1/1.</text>
</comment>
<comment type="subcellular location">
    <subcellularLocation>
        <location>Cytoplasm</location>
    </subcellularLocation>
</comment>
<comment type="induction">
    <text evidence="4">By blue light.</text>
</comment>
<comment type="similarity">
    <text evidence="5">Belongs to the FPP/GGPP synthase family.</text>
</comment>
<dbReference type="EC" id="2.5.1.-"/>
<dbReference type="EC" id="2.5.1.1"/>
<dbReference type="EC" id="2.5.1.29"/>
<dbReference type="EC" id="2.5.1.10"/>
<dbReference type="EMBL" id="AJ276129">
    <property type="protein sequence ID" value="CAB89115.1"/>
    <property type="molecule type" value="Genomic_DNA"/>
</dbReference>
<dbReference type="SMR" id="Q9P885"/>
<dbReference type="UniPathway" id="UPA00259">
    <property type="reaction ID" value="UER00368"/>
</dbReference>
<dbReference type="UniPathway" id="UPA00260">
    <property type="reaction ID" value="UER00369"/>
</dbReference>
<dbReference type="UniPathway" id="UPA00389">
    <property type="reaction ID" value="UER00564"/>
</dbReference>
<dbReference type="GO" id="GO:0005737">
    <property type="term" value="C:cytoplasm"/>
    <property type="evidence" value="ECO:0007669"/>
    <property type="project" value="UniProtKB-SubCell"/>
</dbReference>
<dbReference type="GO" id="GO:0004337">
    <property type="term" value="F:(2E,6E)-farnesyl diphosphate synthase activity"/>
    <property type="evidence" value="ECO:0007669"/>
    <property type="project" value="UniProtKB-EC"/>
</dbReference>
<dbReference type="GO" id="GO:0004161">
    <property type="term" value="F:dimethylallyltranstransferase activity"/>
    <property type="evidence" value="ECO:0007669"/>
    <property type="project" value="UniProtKB-EC"/>
</dbReference>
<dbReference type="GO" id="GO:0004311">
    <property type="term" value="F:geranylgeranyl diphosphate synthase activity"/>
    <property type="evidence" value="ECO:0000314"/>
    <property type="project" value="UniProtKB"/>
</dbReference>
<dbReference type="GO" id="GO:0046872">
    <property type="term" value="F:metal ion binding"/>
    <property type="evidence" value="ECO:0007669"/>
    <property type="project" value="UniProtKB-KW"/>
</dbReference>
<dbReference type="GO" id="GO:0016117">
    <property type="term" value="P:carotenoid biosynthetic process"/>
    <property type="evidence" value="ECO:0000314"/>
    <property type="project" value="UniProtKB"/>
</dbReference>
<dbReference type="GO" id="GO:0045337">
    <property type="term" value="P:farnesyl diphosphate biosynthetic process"/>
    <property type="evidence" value="ECO:0007669"/>
    <property type="project" value="UniProtKB-UniPathway"/>
</dbReference>
<dbReference type="GO" id="GO:0033384">
    <property type="term" value="P:geranyl diphosphate biosynthetic process"/>
    <property type="evidence" value="ECO:0007669"/>
    <property type="project" value="UniProtKB-UniPathway"/>
</dbReference>
<dbReference type="GO" id="GO:0033386">
    <property type="term" value="P:geranylgeranyl diphosphate biosynthetic process"/>
    <property type="evidence" value="ECO:0007669"/>
    <property type="project" value="UniProtKB-UniPathway"/>
</dbReference>
<dbReference type="GO" id="GO:0006720">
    <property type="term" value="P:isoprenoid metabolic process"/>
    <property type="evidence" value="ECO:0000314"/>
    <property type="project" value="UniProtKB"/>
</dbReference>
<dbReference type="CDD" id="cd00685">
    <property type="entry name" value="Trans_IPPS_HT"/>
    <property type="match status" value="1"/>
</dbReference>
<dbReference type="FunFam" id="1.10.600.10:FF:000049">
    <property type="entry name" value="Geranylgeranyl pyrophosphate synthetase"/>
    <property type="match status" value="1"/>
</dbReference>
<dbReference type="Gene3D" id="1.10.600.10">
    <property type="entry name" value="Farnesyl Diphosphate Synthase"/>
    <property type="match status" value="1"/>
</dbReference>
<dbReference type="InterPro" id="IPR008949">
    <property type="entry name" value="Isoprenoid_synthase_dom_sf"/>
</dbReference>
<dbReference type="InterPro" id="IPR000092">
    <property type="entry name" value="Polyprenyl_synt"/>
</dbReference>
<dbReference type="InterPro" id="IPR033749">
    <property type="entry name" value="Polyprenyl_synt_CS"/>
</dbReference>
<dbReference type="PANTHER" id="PTHR12001">
    <property type="entry name" value="GERANYLGERANYL PYROPHOSPHATE SYNTHASE"/>
    <property type="match status" value="1"/>
</dbReference>
<dbReference type="PANTHER" id="PTHR12001:SF44">
    <property type="entry name" value="GERANYLGERANYL PYROPHOSPHATE SYNTHASE"/>
    <property type="match status" value="1"/>
</dbReference>
<dbReference type="Pfam" id="PF00348">
    <property type="entry name" value="polyprenyl_synt"/>
    <property type="match status" value="1"/>
</dbReference>
<dbReference type="SFLD" id="SFLDS00005">
    <property type="entry name" value="Isoprenoid_Synthase_Type_I"/>
    <property type="match status" value="1"/>
</dbReference>
<dbReference type="SUPFAM" id="SSF48576">
    <property type="entry name" value="Terpenoid synthases"/>
    <property type="match status" value="1"/>
</dbReference>
<dbReference type="PROSITE" id="PS00723">
    <property type="entry name" value="POLYPRENYL_SYNTHASE_1"/>
    <property type="match status" value="1"/>
</dbReference>
<dbReference type="PROSITE" id="PS00444">
    <property type="entry name" value="POLYPRENYL_SYNTHASE_2"/>
    <property type="match status" value="1"/>
</dbReference>
<name>GGPPS_MUCCL</name>
<evidence type="ECO:0000250" key="1"/>
<evidence type="ECO:0000250" key="2">
    <source>
        <dbReference type="UniProtKB" id="P14324"/>
    </source>
</evidence>
<evidence type="ECO:0000250" key="3">
    <source>
        <dbReference type="UniProtKB" id="Q12051"/>
    </source>
</evidence>
<evidence type="ECO:0000269" key="4">
    <source>
    </source>
</evidence>
<evidence type="ECO:0000305" key="5"/>
<evidence type="ECO:0000312" key="6">
    <source>
        <dbReference type="EMBL" id="CAB89115.1"/>
    </source>
</evidence>
<protein>
    <recommendedName>
        <fullName>Geranylgeranyl pyrophosphate synthase</fullName>
        <shortName>GGPP synthase</shortName>
        <shortName>GGPPSase</shortName>
        <ecNumber>2.5.1.-</ecNumber>
    </recommendedName>
    <alternativeName>
        <fullName>(2E,6E)-farnesyl diphosphate synthase</fullName>
    </alternativeName>
    <alternativeName>
        <fullName>Dimethylallyltranstransferase</fullName>
        <ecNumber>2.5.1.1</ecNumber>
    </alternativeName>
    <alternativeName>
        <fullName>Farnesyl diphosphate synthase</fullName>
    </alternativeName>
    <alternativeName>
        <fullName>Farnesyltranstransferase</fullName>
        <ecNumber>2.5.1.29</ecNumber>
    </alternativeName>
    <alternativeName>
        <fullName>Geranylgeranyl diphosphate synthase</fullName>
    </alternativeName>
    <alternativeName>
        <fullName>Geranyltranstransferase</fullName>
        <ecNumber>2.5.1.10</ecNumber>
    </alternativeName>
</protein>
<feature type="chain" id="PRO_0000123967" description="Geranylgeranyl pyrophosphate synthase">
    <location>
        <begin position="1"/>
        <end position="303"/>
    </location>
</feature>
<feature type="binding site" evidence="2">
    <location>
        <position position="30"/>
    </location>
    <ligand>
        <name>isopentenyl diphosphate</name>
        <dbReference type="ChEBI" id="CHEBI:128769"/>
    </ligand>
</feature>
<feature type="binding site" evidence="2">
    <location>
        <position position="33"/>
    </location>
    <ligand>
        <name>isopentenyl diphosphate</name>
        <dbReference type="ChEBI" id="CHEBI:128769"/>
    </ligand>
</feature>
<feature type="binding site" evidence="3">
    <location>
        <position position="62"/>
    </location>
    <ligand>
        <name>isopentenyl diphosphate</name>
        <dbReference type="ChEBI" id="CHEBI:128769"/>
    </ligand>
</feature>
<feature type="binding site" evidence="2">
    <location>
        <position position="69"/>
    </location>
    <ligand>
        <name>Mg(2+)</name>
        <dbReference type="ChEBI" id="CHEBI:18420"/>
        <label>1</label>
    </ligand>
</feature>
<feature type="binding site" evidence="2">
    <location>
        <position position="69"/>
    </location>
    <ligand>
        <name>Mg(2+)</name>
        <dbReference type="ChEBI" id="CHEBI:18420"/>
        <label>2</label>
    </ligand>
</feature>
<feature type="binding site" evidence="2">
    <location>
        <position position="73"/>
    </location>
    <ligand>
        <name>Mg(2+)</name>
        <dbReference type="ChEBI" id="CHEBI:18420"/>
        <label>1</label>
    </ligand>
</feature>
<feature type="binding site" evidence="2">
    <location>
        <position position="73"/>
    </location>
    <ligand>
        <name>Mg(2+)</name>
        <dbReference type="ChEBI" id="CHEBI:18420"/>
        <label>2</label>
    </ligand>
</feature>
<feature type="binding site" evidence="1">
    <location>
        <position position="78"/>
    </location>
    <ligand>
        <name>dimethylallyl diphosphate</name>
        <dbReference type="ChEBI" id="CHEBI:57623"/>
    </ligand>
</feature>
<feature type="binding site" evidence="2">
    <location>
        <position position="79"/>
    </location>
    <ligand>
        <name>isopentenyl diphosphate</name>
        <dbReference type="ChEBI" id="CHEBI:128769"/>
    </ligand>
</feature>
<feature type="binding site" evidence="1">
    <location>
        <position position="156"/>
    </location>
    <ligand>
        <name>dimethylallyl diphosphate</name>
        <dbReference type="ChEBI" id="CHEBI:57623"/>
    </ligand>
</feature>
<feature type="binding site" evidence="1">
    <location>
        <position position="157"/>
    </location>
    <ligand>
        <name>dimethylallyl diphosphate</name>
        <dbReference type="ChEBI" id="CHEBI:57623"/>
    </ligand>
</feature>
<feature type="binding site" evidence="1">
    <location>
        <position position="190"/>
    </location>
    <ligand>
        <name>dimethylallyl diphosphate</name>
        <dbReference type="ChEBI" id="CHEBI:57623"/>
    </ligand>
</feature>
<feature type="binding site" evidence="1">
    <location>
        <position position="207"/>
    </location>
    <ligand>
        <name>dimethylallyl diphosphate</name>
        <dbReference type="ChEBI" id="CHEBI:57623"/>
    </ligand>
</feature>
<feature type="binding site" evidence="1">
    <location>
        <position position="217"/>
    </location>
    <ligand>
        <name>dimethylallyl diphosphate</name>
        <dbReference type="ChEBI" id="CHEBI:57623"/>
    </ligand>
</feature>
<gene>
    <name evidence="6" type="primary">carG</name>
</gene>